<name>PUR7_ECOLC</name>
<reference key="1">
    <citation type="submission" date="2008-02" db="EMBL/GenBank/DDBJ databases">
        <title>Complete sequence of Escherichia coli C str. ATCC 8739.</title>
        <authorList>
            <person name="Copeland A."/>
            <person name="Lucas S."/>
            <person name="Lapidus A."/>
            <person name="Glavina del Rio T."/>
            <person name="Dalin E."/>
            <person name="Tice H."/>
            <person name="Bruce D."/>
            <person name="Goodwin L."/>
            <person name="Pitluck S."/>
            <person name="Kiss H."/>
            <person name="Brettin T."/>
            <person name="Detter J.C."/>
            <person name="Han C."/>
            <person name="Kuske C.R."/>
            <person name="Schmutz J."/>
            <person name="Larimer F."/>
            <person name="Land M."/>
            <person name="Hauser L."/>
            <person name="Kyrpides N."/>
            <person name="Mikhailova N."/>
            <person name="Ingram L."/>
            <person name="Richardson P."/>
        </authorList>
    </citation>
    <scope>NUCLEOTIDE SEQUENCE [LARGE SCALE GENOMIC DNA]</scope>
    <source>
        <strain>ATCC 8739 / DSM 1576 / NBRC 3972 / NCIMB 8545 / WDCM 00012 / Crooks</strain>
    </source>
</reference>
<comment type="catalytic activity">
    <reaction evidence="1">
        <text>5-amino-1-(5-phospho-D-ribosyl)imidazole-4-carboxylate + L-aspartate + ATP = (2S)-2-[5-amino-1-(5-phospho-beta-D-ribosyl)imidazole-4-carboxamido]succinate + ADP + phosphate + 2 H(+)</text>
        <dbReference type="Rhea" id="RHEA:22628"/>
        <dbReference type="ChEBI" id="CHEBI:15378"/>
        <dbReference type="ChEBI" id="CHEBI:29991"/>
        <dbReference type="ChEBI" id="CHEBI:30616"/>
        <dbReference type="ChEBI" id="CHEBI:43474"/>
        <dbReference type="ChEBI" id="CHEBI:58443"/>
        <dbReference type="ChEBI" id="CHEBI:77657"/>
        <dbReference type="ChEBI" id="CHEBI:456216"/>
        <dbReference type="EC" id="6.3.2.6"/>
    </reaction>
</comment>
<comment type="pathway">
    <text evidence="1">Purine metabolism; IMP biosynthesis via de novo pathway; 5-amino-1-(5-phospho-D-ribosyl)imidazole-4-carboxamide from 5-amino-1-(5-phospho-D-ribosyl)imidazole-4-carboxylate: step 1/2.</text>
</comment>
<comment type="similarity">
    <text evidence="1">Belongs to the SAICAR synthetase family.</text>
</comment>
<keyword id="KW-0067">ATP-binding</keyword>
<keyword id="KW-0436">Ligase</keyword>
<keyword id="KW-0547">Nucleotide-binding</keyword>
<keyword id="KW-0658">Purine biosynthesis</keyword>
<gene>
    <name evidence="1" type="primary">purC</name>
    <name type="ordered locus">EcolC_1200</name>
</gene>
<feature type="chain" id="PRO_1000076453" description="Phosphoribosylaminoimidazole-succinocarboxamide synthase">
    <location>
        <begin position="1"/>
        <end position="237"/>
    </location>
</feature>
<organism>
    <name type="scientific">Escherichia coli (strain ATCC 8739 / DSM 1576 / NBRC 3972 / NCIMB 8545 / WDCM 00012 / Crooks)</name>
    <dbReference type="NCBI Taxonomy" id="481805"/>
    <lineage>
        <taxon>Bacteria</taxon>
        <taxon>Pseudomonadati</taxon>
        <taxon>Pseudomonadota</taxon>
        <taxon>Gammaproteobacteria</taxon>
        <taxon>Enterobacterales</taxon>
        <taxon>Enterobacteriaceae</taxon>
        <taxon>Escherichia</taxon>
    </lineage>
</organism>
<evidence type="ECO:0000255" key="1">
    <source>
        <dbReference type="HAMAP-Rule" id="MF_00137"/>
    </source>
</evidence>
<proteinExistence type="inferred from homology"/>
<sequence>MQKQAELYRGKAKTVYSTENPDLLVLEFRNDTSAGDGARIEQFDRKGMVNNKFNYFIMSKLAEAGIPTQMERLLSDTECLVKKLDMVPVECVVRNRAAGSLVKRLGIEEGIELNPPLFDLFLKNDAMHDPMVNESYCETFGWVSKENLARMKELTYKANDVLKKLFDDAGLILVDFKLEFGLYKGEVVLGDEFSPDGSRLWDKETLEKMDKDRFRQSLGGLIEAYEAVARRLGVQLD</sequence>
<accession>B1IWI3</accession>
<protein>
    <recommendedName>
        <fullName evidence="1">Phosphoribosylaminoimidazole-succinocarboxamide synthase</fullName>
        <ecNumber evidence="1">6.3.2.6</ecNumber>
    </recommendedName>
    <alternativeName>
        <fullName evidence="1">SAICAR synthetase</fullName>
    </alternativeName>
</protein>
<dbReference type="EC" id="6.3.2.6" evidence="1"/>
<dbReference type="EMBL" id="CP000946">
    <property type="protein sequence ID" value="ACA76866.1"/>
    <property type="molecule type" value="Genomic_DNA"/>
</dbReference>
<dbReference type="RefSeq" id="WP_001295467.1">
    <property type="nucleotide sequence ID" value="NZ_MTFT01000002.1"/>
</dbReference>
<dbReference type="SMR" id="B1IWI3"/>
<dbReference type="GeneID" id="89517285"/>
<dbReference type="KEGG" id="ecl:EcolC_1200"/>
<dbReference type="HOGENOM" id="CLU_061495_2_1_6"/>
<dbReference type="UniPathway" id="UPA00074">
    <property type="reaction ID" value="UER00131"/>
</dbReference>
<dbReference type="GO" id="GO:0005829">
    <property type="term" value="C:cytosol"/>
    <property type="evidence" value="ECO:0007669"/>
    <property type="project" value="TreeGrafter"/>
</dbReference>
<dbReference type="GO" id="GO:0005524">
    <property type="term" value="F:ATP binding"/>
    <property type="evidence" value="ECO:0007669"/>
    <property type="project" value="UniProtKB-KW"/>
</dbReference>
<dbReference type="GO" id="GO:0004639">
    <property type="term" value="F:phosphoribosylaminoimidazolesuccinocarboxamide synthase activity"/>
    <property type="evidence" value="ECO:0007669"/>
    <property type="project" value="UniProtKB-UniRule"/>
</dbReference>
<dbReference type="GO" id="GO:0006189">
    <property type="term" value="P:'de novo' IMP biosynthetic process"/>
    <property type="evidence" value="ECO:0007669"/>
    <property type="project" value="UniProtKB-UniRule"/>
</dbReference>
<dbReference type="GO" id="GO:0009236">
    <property type="term" value="P:cobalamin biosynthetic process"/>
    <property type="evidence" value="ECO:0007669"/>
    <property type="project" value="InterPro"/>
</dbReference>
<dbReference type="CDD" id="cd01415">
    <property type="entry name" value="SAICAR_synt_PurC"/>
    <property type="match status" value="1"/>
</dbReference>
<dbReference type="FunFam" id="3.30.200.20:FF:000086">
    <property type="entry name" value="Phosphoribosylaminoimidazole-succinocarboxamide synthase"/>
    <property type="match status" value="1"/>
</dbReference>
<dbReference type="FunFam" id="3.30.470.20:FF:000006">
    <property type="entry name" value="Phosphoribosylaminoimidazole-succinocarboxamide synthase"/>
    <property type="match status" value="1"/>
</dbReference>
<dbReference type="Gene3D" id="3.30.470.20">
    <property type="entry name" value="ATP-grasp fold, B domain"/>
    <property type="match status" value="1"/>
</dbReference>
<dbReference type="Gene3D" id="3.30.200.20">
    <property type="entry name" value="Phosphorylase Kinase, domain 1"/>
    <property type="match status" value="1"/>
</dbReference>
<dbReference type="HAMAP" id="MF_00137">
    <property type="entry name" value="SAICAR_synth"/>
    <property type="match status" value="1"/>
</dbReference>
<dbReference type="InterPro" id="IPR028923">
    <property type="entry name" value="SAICAR_synt/ADE2_N"/>
</dbReference>
<dbReference type="InterPro" id="IPR033934">
    <property type="entry name" value="SAICAR_synt_PurC"/>
</dbReference>
<dbReference type="InterPro" id="IPR001636">
    <property type="entry name" value="SAICAR_synth"/>
</dbReference>
<dbReference type="InterPro" id="IPR050089">
    <property type="entry name" value="SAICAR_synthetase"/>
</dbReference>
<dbReference type="InterPro" id="IPR018236">
    <property type="entry name" value="SAICAR_synthetase_CS"/>
</dbReference>
<dbReference type="NCBIfam" id="TIGR00081">
    <property type="entry name" value="purC"/>
    <property type="match status" value="1"/>
</dbReference>
<dbReference type="PANTHER" id="PTHR43599">
    <property type="entry name" value="MULTIFUNCTIONAL PROTEIN ADE2"/>
    <property type="match status" value="1"/>
</dbReference>
<dbReference type="PANTHER" id="PTHR43599:SF3">
    <property type="entry name" value="SI:DKEY-6E2.2"/>
    <property type="match status" value="1"/>
</dbReference>
<dbReference type="Pfam" id="PF01259">
    <property type="entry name" value="SAICAR_synt"/>
    <property type="match status" value="1"/>
</dbReference>
<dbReference type="SUPFAM" id="SSF56104">
    <property type="entry name" value="SAICAR synthase-like"/>
    <property type="match status" value="1"/>
</dbReference>
<dbReference type="PROSITE" id="PS01057">
    <property type="entry name" value="SAICAR_SYNTHETASE_1"/>
    <property type="match status" value="1"/>
</dbReference>
<dbReference type="PROSITE" id="PS01058">
    <property type="entry name" value="SAICAR_SYNTHETASE_2"/>
    <property type="match status" value="1"/>
</dbReference>